<gene>
    <name type="primary">ned1</name>
    <name type="ORF">SPAC1952.13</name>
</gene>
<name>NED1_SCHPO</name>
<organism>
    <name type="scientific">Schizosaccharomyces pombe (strain 972 / ATCC 24843)</name>
    <name type="common">Fission yeast</name>
    <dbReference type="NCBI Taxonomy" id="284812"/>
    <lineage>
        <taxon>Eukaryota</taxon>
        <taxon>Fungi</taxon>
        <taxon>Dikarya</taxon>
        <taxon>Ascomycota</taxon>
        <taxon>Taphrinomycotina</taxon>
        <taxon>Schizosaccharomycetes</taxon>
        <taxon>Schizosaccharomycetales</taxon>
        <taxon>Schizosaccharomycetaceae</taxon>
        <taxon>Schizosaccharomyces</taxon>
    </lineage>
</organism>
<comment type="function">
    <text evidence="2">May have a role in the maintenance of the nuclear envelope structure and in minichromosome stability.</text>
</comment>
<comment type="subunit">
    <text evidence="2">Interacts with dis3, pim1 and nup189.</text>
</comment>
<comment type="similarity">
    <text evidence="4">Belongs to the lipin family.</text>
</comment>
<feature type="chain" id="PRO_0000209886" description="Nuclear elongation and deformation protein 1">
    <location>
        <begin position="1"/>
        <end position="656"/>
    </location>
</feature>
<feature type="region of interest" description="Disordered" evidence="1">
    <location>
        <begin position="99"/>
        <end position="121"/>
    </location>
</feature>
<feature type="region of interest" description="Disordered" evidence="1">
    <location>
        <begin position="282"/>
        <end position="328"/>
    </location>
</feature>
<feature type="region of interest" description="Disordered" evidence="1">
    <location>
        <begin position="587"/>
        <end position="656"/>
    </location>
</feature>
<feature type="compositionally biased region" description="Polar residues" evidence="1">
    <location>
        <begin position="99"/>
        <end position="118"/>
    </location>
</feature>
<feature type="compositionally biased region" description="Low complexity" evidence="1">
    <location>
        <begin position="291"/>
        <end position="300"/>
    </location>
</feature>
<feature type="compositionally biased region" description="Polar residues" evidence="1">
    <location>
        <begin position="318"/>
        <end position="328"/>
    </location>
</feature>
<feature type="compositionally biased region" description="Low complexity" evidence="1">
    <location>
        <begin position="596"/>
        <end position="609"/>
    </location>
</feature>
<feature type="compositionally biased region" description="Acidic residues" evidence="1">
    <location>
        <begin position="640"/>
        <end position="656"/>
    </location>
</feature>
<feature type="modified residue" description="Phosphoserine" evidence="3">
    <location>
        <position position="99"/>
    </location>
</feature>
<feature type="modified residue" description="Phosphoserine" evidence="3">
    <location>
        <position position="103"/>
    </location>
</feature>
<feature type="modified residue" description="Phosphothreonine" evidence="3">
    <location>
        <position position="106"/>
    </location>
</feature>
<feature type="modified residue" description="Phosphoserine" evidence="3">
    <location>
        <position position="107"/>
    </location>
</feature>
<feature type="modified residue" description="Phosphoserine" evidence="3">
    <location>
        <position position="159"/>
    </location>
</feature>
<feature type="modified residue" description="Phosphoserine" evidence="3">
    <location>
        <position position="286"/>
    </location>
</feature>
<feature type="modified residue" description="Phosphoserine" evidence="3">
    <location>
        <position position="318"/>
    </location>
</feature>
<feature type="modified residue" description="Phosphoserine" evidence="3">
    <location>
        <position position="321"/>
    </location>
</feature>
<feature type="modified residue" description="Phosphoserine" evidence="3">
    <location>
        <position position="587"/>
    </location>
</feature>
<feature type="mutagenesis site" description="No interaction with dis3; 10-fold increase in minichromosome loss." evidence="2">
    <original>G</original>
    <variation>A</variation>
    <location>
        <position position="80"/>
    </location>
</feature>
<feature type="mutagenesis site" description="10-fold increase in minichromosome loss." evidence="2">
    <original>G</original>
    <variation>D</variation>
    <location>
        <position position="402"/>
    </location>
</feature>
<sequence length="656" mass="73352">MQYVGRAFDSVTKTWNAINPSTLSGAIDVIVVEQEDKTLACSPFHVRFGKFSLLLPSDKKVEFSVNGQLTGFNMKLGDGGEAFFVFATENAVPRELQTSPIVSPTTSPKQTPSINVTEPQDLELDKVSQDHEKDQSNTYLMEDGYEFPLTRDLIRRSKSDADQTPPTGFKHLRHSSCLEMAGSDRTPSMPATTLADLRLLQKAKELGKRLSGKELPTRVGDNGDVMLDMTGYKSSAANINIAELARETFKDEFPMIEKLLREDEEGNLWFHASEDAKKFAEVYGHSPPASPSRTPASPKSDSALMDEDSDLSRRHSLSEQSLSPVSESYPQYAKTLRLTSDQLRSLNLKPGKNELSFGVNGGKAICTANLFFWKHNDPVVISDIDGTITKSDALGHMFTLIGKDWTHAGVAKLYTDITNNGYKIMYLTSRSVGQADSTRHYLRNIEQNGYSLPDGPVILSPDRTMAALHREVILRKPEVFKMACLRDLCNIFALPVPRTPFYAGFGNRITDAISYNHVRVPPTRIFTINSAGEVHIELLQRSGHRSSYVYMNELVDHFFPPIEVSTRDEVSSFTDVNFWRSPLLELSDEEEDDTNKSTSKSPKTPKNTKFGYQEFEGIDEEDAQDYSPSPLIKSFNELMFEGEEDEEGEEDVENAV</sequence>
<protein>
    <recommendedName>
        <fullName>Nuclear elongation and deformation protein 1</fullName>
    </recommendedName>
</protein>
<keyword id="KW-0597">Phosphoprotein</keyword>
<keyword id="KW-1185">Reference proteome</keyword>
<dbReference type="EMBL" id="CU329670">
    <property type="protein sequence ID" value="CAB52577.1"/>
    <property type="molecule type" value="Genomic_DNA"/>
</dbReference>
<dbReference type="PIR" id="T37941">
    <property type="entry name" value="T37941"/>
</dbReference>
<dbReference type="RefSeq" id="NP_594815.1">
    <property type="nucleotide sequence ID" value="NM_001020244.2"/>
</dbReference>
<dbReference type="BioGRID" id="278743">
    <property type="interactions" value="8"/>
</dbReference>
<dbReference type="FunCoup" id="Q9UUJ6">
    <property type="interactions" value="406"/>
</dbReference>
<dbReference type="STRING" id="284812.Q9UUJ6"/>
<dbReference type="iPTMnet" id="Q9UUJ6"/>
<dbReference type="PaxDb" id="4896-SPAC1952.13.1"/>
<dbReference type="EnsemblFungi" id="SPAC1952.13.1">
    <property type="protein sequence ID" value="SPAC1952.13.1:pep"/>
    <property type="gene ID" value="SPAC1952.13"/>
</dbReference>
<dbReference type="GeneID" id="2542274"/>
<dbReference type="KEGG" id="spo:2542274"/>
<dbReference type="PomBase" id="SPAC1952.13">
    <property type="gene designation" value="ned1"/>
</dbReference>
<dbReference type="VEuPathDB" id="FungiDB:SPAC1952.13"/>
<dbReference type="eggNOG" id="KOG2116">
    <property type="taxonomic scope" value="Eukaryota"/>
</dbReference>
<dbReference type="HOGENOM" id="CLU_002546_3_0_1"/>
<dbReference type="InParanoid" id="Q9UUJ6"/>
<dbReference type="OMA" id="QDYSMKL"/>
<dbReference type="PhylomeDB" id="Q9UUJ6"/>
<dbReference type="Reactome" id="R-SPO-1483191">
    <property type="pathway name" value="Synthesis of PC"/>
</dbReference>
<dbReference type="Reactome" id="R-SPO-1483213">
    <property type="pathway name" value="Synthesis of PE"/>
</dbReference>
<dbReference type="Reactome" id="R-SPO-4419969">
    <property type="pathway name" value="Depolymerization of the Nuclear Lamina"/>
</dbReference>
<dbReference type="Reactome" id="R-SPO-75109">
    <property type="pathway name" value="Triglyceride biosynthesis"/>
</dbReference>
<dbReference type="PRO" id="PR:Q9UUJ6"/>
<dbReference type="Proteomes" id="UP000002485">
    <property type="component" value="Chromosome I"/>
</dbReference>
<dbReference type="GO" id="GO:0005829">
    <property type="term" value="C:cytosol"/>
    <property type="evidence" value="ECO:0007005"/>
    <property type="project" value="PomBase"/>
</dbReference>
<dbReference type="GO" id="GO:0005634">
    <property type="term" value="C:nucleus"/>
    <property type="evidence" value="ECO:0000269"/>
    <property type="project" value="PomBase"/>
</dbReference>
<dbReference type="GO" id="GO:0000287">
    <property type="term" value="F:magnesium ion binding"/>
    <property type="evidence" value="ECO:0000255"/>
    <property type="project" value="PomBase"/>
</dbReference>
<dbReference type="GO" id="GO:0008195">
    <property type="term" value="F:phosphatidate phosphatase activity"/>
    <property type="evidence" value="ECO:0000318"/>
    <property type="project" value="GO_Central"/>
</dbReference>
<dbReference type="GO" id="GO:0007029">
    <property type="term" value="P:endoplasmic reticulum organization"/>
    <property type="evidence" value="ECO:0000315"/>
    <property type="project" value="PomBase"/>
</dbReference>
<dbReference type="GO" id="GO:0009062">
    <property type="term" value="P:fatty acid catabolic process"/>
    <property type="evidence" value="ECO:0000318"/>
    <property type="project" value="GO_Central"/>
</dbReference>
<dbReference type="GO" id="GO:0019915">
    <property type="term" value="P:lipid storage"/>
    <property type="evidence" value="ECO:0000315"/>
    <property type="project" value="PomBase"/>
</dbReference>
<dbReference type="GO" id="GO:0071763">
    <property type="term" value="P:nuclear membrane organization"/>
    <property type="evidence" value="ECO:0000315"/>
    <property type="project" value="PomBase"/>
</dbReference>
<dbReference type="GO" id="GO:0019432">
    <property type="term" value="P:triglyceride biosynthetic process"/>
    <property type="evidence" value="ECO:0000318"/>
    <property type="project" value="GO_Central"/>
</dbReference>
<dbReference type="FunFam" id="3.40.50.1000:FF:000063">
    <property type="entry name" value="Nuclear elongation and deformation protein"/>
    <property type="match status" value="1"/>
</dbReference>
<dbReference type="Gene3D" id="3.40.50.1000">
    <property type="entry name" value="HAD superfamily/HAD-like"/>
    <property type="match status" value="1"/>
</dbReference>
<dbReference type="InterPro" id="IPR036412">
    <property type="entry name" value="HAD-like_sf"/>
</dbReference>
<dbReference type="InterPro" id="IPR023214">
    <property type="entry name" value="HAD_sf"/>
</dbReference>
<dbReference type="InterPro" id="IPR026058">
    <property type="entry name" value="LIPIN"/>
</dbReference>
<dbReference type="InterPro" id="IPR007651">
    <property type="entry name" value="Lipin_N"/>
</dbReference>
<dbReference type="InterPro" id="IPR013209">
    <property type="entry name" value="LNS2"/>
</dbReference>
<dbReference type="InterPro" id="IPR031315">
    <property type="entry name" value="LNS2/PITP"/>
</dbReference>
<dbReference type="PANTHER" id="PTHR12181">
    <property type="entry name" value="LIPIN"/>
    <property type="match status" value="1"/>
</dbReference>
<dbReference type="PANTHER" id="PTHR12181:SF12">
    <property type="entry name" value="PHOSPHATIDATE PHOSPHATASE"/>
    <property type="match status" value="1"/>
</dbReference>
<dbReference type="Pfam" id="PF04571">
    <property type="entry name" value="Lipin_N"/>
    <property type="match status" value="1"/>
</dbReference>
<dbReference type="Pfam" id="PF08235">
    <property type="entry name" value="LNS2"/>
    <property type="match status" value="1"/>
</dbReference>
<dbReference type="Pfam" id="PF24565">
    <property type="entry name" value="Ned1_M"/>
    <property type="match status" value="1"/>
</dbReference>
<dbReference type="SMART" id="SM00775">
    <property type="entry name" value="LNS2"/>
    <property type="match status" value="1"/>
</dbReference>
<dbReference type="SUPFAM" id="SSF56784">
    <property type="entry name" value="HAD-like"/>
    <property type="match status" value="1"/>
</dbReference>
<proteinExistence type="evidence at protein level"/>
<reference key="1">
    <citation type="journal article" date="2002" name="J. Cell Sci.">
        <title>An evolutionarily conserved fission yeast protein, Ned1, implicated in normal nuclear morphology and chromosome stability, interacts with Dis3, Pim1/RCC1 and an essential nucleoporin.</title>
        <authorList>
            <person name="Tange Y."/>
            <person name="Hirata A."/>
            <person name="Niwa O."/>
        </authorList>
    </citation>
    <scope>NUCLEOTIDE SEQUENCE [GENOMIC DNA]</scope>
    <scope>FUNCTION</scope>
    <scope>INTERACTION WITH DIS3; PIM1 AND NUP189</scope>
    <scope>PHOSPHORYLATION</scope>
    <scope>MUTAGENESIS OF GLY-80 AND GLY-402</scope>
</reference>
<reference key="2">
    <citation type="journal article" date="2002" name="Nature">
        <title>The genome sequence of Schizosaccharomyces pombe.</title>
        <authorList>
            <person name="Wood V."/>
            <person name="Gwilliam R."/>
            <person name="Rajandream M.A."/>
            <person name="Lyne M.H."/>
            <person name="Lyne R."/>
            <person name="Stewart A."/>
            <person name="Sgouros J.G."/>
            <person name="Peat N."/>
            <person name="Hayles J."/>
            <person name="Baker S.G."/>
            <person name="Basham D."/>
            <person name="Bowman S."/>
            <person name="Brooks K."/>
            <person name="Brown D."/>
            <person name="Brown S."/>
            <person name="Chillingworth T."/>
            <person name="Churcher C.M."/>
            <person name="Collins M."/>
            <person name="Connor R."/>
            <person name="Cronin A."/>
            <person name="Davis P."/>
            <person name="Feltwell T."/>
            <person name="Fraser A."/>
            <person name="Gentles S."/>
            <person name="Goble A."/>
            <person name="Hamlin N."/>
            <person name="Harris D.E."/>
            <person name="Hidalgo J."/>
            <person name="Hodgson G."/>
            <person name="Holroyd S."/>
            <person name="Hornsby T."/>
            <person name="Howarth S."/>
            <person name="Huckle E.J."/>
            <person name="Hunt S."/>
            <person name="Jagels K."/>
            <person name="James K.D."/>
            <person name="Jones L."/>
            <person name="Jones M."/>
            <person name="Leather S."/>
            <person name="McDonald S."/>
            <person name="McLean J."/>
            <person name="Mooney P."/>
            <person name="Moule S."/>
            <person name="Mungall K.L."/>
            <person name="Murphy L.D."/>
            <person name="Niblett D."/>
            <person name="Odell C."/>
            <person name="Oliver K."/>
            <person name="O'Neil S."/>
            <person name="Pearson D."/>
            <person name="Quail M.A."/>
            <person name="Rabbinowitsch E."/>
            <person name="Rutherford K.M."/>
            <person name="Rutter S."/>
            <person name="Saunders D."/>
            <person name="Seeger K."/>
            <person name="Sharp S."/>
            <person name="Skelton J."/>
            <person name="Simmonds M.N."/>
            <person name="Squares R."/>
            <person name="Squares S."/>
            <person name="Stevens K."/>
            <person name="Taylor K."/>
            <person name="Taylor R.G."/>
            <person name="Tivey A."/>
            <person name="Walsh S.V."/>
            <person name="Warren T."/>
            <person name="Whitehead S."/>
            <person name="Woodward J.R."/>
            <person name="Volckaert G."/>
            <person name="Aert R."/>
            <person name="Robben J."/>
            <person name="Grymonprez B."/>
            <person name="Weltjens I."/>
            <person name="Vanstreels E."/>
            <person name="Rieger M."/>
            <person name="Schaefer M."/>
            <person name="Mueller-Auer S."/>
            <person name="Gabel C."/>
            <person name="Fuchs M."/>
            <person name="Duesterhoeft A."/>
            <person name="Fritzc C."/>
            <person name="Holzer E."/>
            <person name="Moestl D."/>
            <person name="Hilbert H."/>
            <person name="Borzym K."/>
            <person name="Langer I."/>
            <person name="Beck A."/>
            <person name="Lehrach H."/>
            <person name="Reinhardt R."/>
            <person name="Pohl T.M."/>
            <person name="Eger P."/>
            <person name="Zimmermann W."/>
            <person name="Wedler H."/>
            <person name="Wambutt R."/>
            <person name="Purnelle B."/>
            <person name="Goffeau A."/>
            <person name="Cadieu E."/>
            <person name="Dreano S."/>
            <person name="Gloux S."/>
            <person name="Lelaure V."/>
            <person name="Mottier S."/>
            <person name="Galibert F."/>
            <person name="Aves S.J."/>
            <person name="Xiang Z."/>
            <person name="Hunt C."/>
            <person name="Moore K."/>
            <person name="Hurst S.M."/>
            <person name="Lucas M."/>
            <person name="Rochet M."/>
            <person name="Gaillardin C."/>
            <person name="Tallada V.A."/>
            <person name="Garzon A."/>
            <person name="Thode G."/>
            <person name="Daga R.R."/>
            <person name="Cruzado L."/>
            <person name="Jimenez J."/>
            <person name="Sanchez M."/>
            <person name="del Rey F."/>
            <person name="Benito J."/>
            <person name="Dominguez A."/>
            <person name="Revuelta J.L."/>
            <person name="Moreno S."/>
            <person name="Armstrong J."/>
            <person name="Forsburg S.L."/>
            <person name="Cerutti L."/>
            <person name="Lowe T."/>
            <person name="McCombie W.R."/>
            <person name="Paulsen I."/>
            <person name="Potashkin J."/>
            <person name="Shpakovski G.V."/>
            <person name="Ussery D."/>
            <person name="Barrell B.G."/>
            <person name="Nurse P."/>
        </authorList>
    </citation>
    <scope>NUCLEOTIDE SEQUENCE [LARGE SCALE GENOMIC DNA]</scope>
    <source>
        <strain>972 / ATCC 24843</strain>
    </source>
</reference>
<reference key="3">
    <citation type="journal article" date="2008" name="J. Proteome Res.">
        <title>Phosphoproteome analysis of fission yeast.</title>
        <authorList>
            <person name="Wilson-Grady J.T."/>
            <person name="Villen J."/>
            <person name="Gygi S.P."/>
        </authorList>
    </citation>
    <scope>PHOSPHORYLATION [LARGE SCALE ANALYSIS] AT SER-99; SER-103; THR-106; SER-107; SER-159; SER-286; SER-318; SER-321 AND SER-587</scope>
    <scope>IDENTIFICATION BY MASS SPECTROMETRY</scope>
</reference>
<accession>Q9UUJ6</accession>
<evidence type="ECO:0000256" key="1">
    <source>
        <dbReference type="SAM" id="MobiDB-lite"/>
    </source>
</evidence>
<evidence type="ECO:0000269" key="2">
    <source>
    </source>
</evidence>
<evidence type="ECO:0000269" key="3">
    <source>
    </source>
</evidence>
<evidence type="ECO:0000305" key="4"/>